<evidence type="ECO:0000250" key="1">
    <source>
        <dbReference type="UniProtKB" id="P28845"/>
    </source>
</evidence>
<evidence type="ECO:0000250" key="2">
    <source>
        <dbReference type="UniProtKB" id="P50172"/>
    </source>
</evidence>
<evidence type="ECO:0000250" key="3">
    <source>
        <dbReference type="UniProtKB" id="P51975"/>
    </source>
</evidence>
<evidence type="ECO:0000255" key="4"/>
<evidence type="ECO:0000269" key="5">
    <source>
    </source>
</evidence>
<evidence type="ECO:0000269" key="6">
    <source>
    </source>
</evidence>
<evidence type="ECO:0000303" key="7">
    <source>
    </source>
</evidence>
<evidence type="ECO:0000305" key="8"/>
<evidence type="ECO:0000305" key="9">
    <source>
    </source>
</evidence>
<evidence type="ECO:0000312" key="10">
    <source>
        <dbReference type="EMBL" id="AAN40687.2"/>
    </source>
</evidence>
<reference evidence="10" key="1">
    <citation type="journal article" date="2003" name="J. Endocrinol.">
        <title>Expression of 11beta-hydroxysteroid dehydrogenases in bovine follicle and corpus luteum.</title>
        <authorList>
            <person name="Tetsuka M."/>
            <person name="Yamamoto S."/>
            <person name="Hayashida N."/>
            <person name="Hayashi K.G."/>
            <person name="Hayashi M."/>
            <person name="Acosta T.J."/>
            <person name="Miyamoto A."/>
        </authorList>
    </citation>
    <scope>NUCLEOTIDE SEQUENCE [MRNA]</scope>
    <scope>TISSUE SPECIFICITY</scope>
</reference>
<reference key="2">
    <citation type="journal article" date="2009" name="Genome Biol.">
        <title>A whole-genome assembly of the domestic cow, Bos taurus.</title>
        <authorList>
            <person name="Zimin A.V."/>
            <person name="Delcher A.L."/>
            <person name="Florea L."/>
            <person name="Kelley D.R."/>
            <person name="Schatz M.C."/>
            <person name="Puiu D."/>
            <person name="Hanrahan F."/>
            <person name="Pertea G."/>
            <person name="Van Tassell C.P."/>
            <person name="Sonstegard T.S."/>
            <person name="Marcais G."/>
            <person name="Roberts M."/>
            <person name="Subramanian P."/>
            <person name="Yorke J.A."/>
            <person name="Salzberg S.L."/>
        </authorList>
    </citation>
    <scope>NUCLEOTIDE SEQUENCE [LARGE SCALE GENOMIC DNA]</scope>
</reference>
<reference key="3">
    <citation type="journal article" date="2007" name="J. Endocrinol.">
        <title>11beta-Hydroxysteroid dehydrogenase expression and activities in bovine granulosa cells and corpora lutea implicate corticosteroids in bovine ovarian physiology.</title>
        <authorList>
            <person name="Thurston L.M."/>
            <person name="Abayasekara D.R."/>
            <person name="Michael A.E."/>
        </authorList>
    </citation>
    <scope>FUNCTION</scope>
    <scope>CATALYTIC ACTIVITY</scope>
</reference>
<proteinExistence type="evidence at protein level"/>
<feature type="chain" id="PRO_0000455006" description="11-beta-hydroxysteroid dehydrogenase 1">
    <location>
        <begin position="1"/>
        <end position="292"/>
    </location>
</feature>
<feature type="transmembrane region" description="Helical" evidence="4">
    <location>
        <begin position="7"/>
        <end position="24"/>
    </location>
</feature>
<organism>
    <name type="scientific">Bos taurus</name>
    <name type="common">Bovine</name>
    <dbReference type="NCBI Taxonomy" id="9913"/>
    <lineage>
        <taxon>Eukaryota</taxon>
        <taxon>Metazoa</taxon>
        <taxon>Chordata</taxon>
        <taxon>Craniata</taxon>
        <taxon>Vertebrata</taxon>
        <taxon>Euteleostomi</taxon>
        <taxon>Mammalia</taxon>
        <taxon>Eutheria</taxon>
        <taxon>Laurasiatheria</taxon>
        <taxon>Artiodactyla</taxon>
        <taxon>Ruminantia</taxon>
        <taxon>Pecora</taxon>
        <taxon>Bovidae</taxon>
        <taxon>Bovinae</taxon>
        <taxon>Bos</taxon>
    </lineage>
</organism>
<protein>
    <recommendedName>
        <fullName>11-beta-hydroxysteroid dehydrogenase 1</fullName>
        <shortName>11-DH</shortName>
        <shortName>11-beta-HSD1</shortName>
        <shortName evidence="7">11HSD1</shortName>
        <ecNumber evidence="6">1.1.1.146</ecNumber>
    </recommendedName>
    <alternativeName>
        <fullName>7-oxosteroid reductase</fullName>
        <ecNumber evidence="1">1.1.1.201</ecNumber>
    </alternativeName>
    <alternativeName>
        <fullName>Corticosteroid 11-beta-dehydrogenase isozyme 1</fullName>
    </alternativeName>
</protein>
<dbReference type="EC" id="1.1.1.146" evidence="6"/>
<dbReference type="EC" id="1.1.1.201" evidence="1"/>
<dbReference type="EMBL" id="AF548027">
    <property type="protein sequence ID" value="AAN40687.2"/>
    <property type="molecule type" value="mRNA"/>
</dbReference>
<dbReference type="RefSeq" id="NP_001116504.1">
    <property type="nucleotide sequence ID" value="NM_001123032.1"/>
</dbReference>
<dbReference type="RefSeq" id="XP_010811844.1">
    <property type="nucleotide sequence ID" value="XM_010813542.2"/>
</dbReference>
<dbReference type="RefSeq" id="XP_059731223.1">
    <property type="nucleotide sequence ID" value="XM_059875240.1"/>
</dbReference>
<dbReference type="SMR" id="Q8HZJ8"/>
<dbReference type="FunCoup" id="Q8HZJ8">
    <property type="interactions" value="67"/>
</dbReference>
<dbReference type="STRING" id="9913.ENSBTAP00000020078"/>
<dbReference type="PaxDb" id="9913-ENSBTAP00000020078"/>
<dbReference type="GeneID" id="282589"/>
<dbReference type="KEGG" id="bta:282589"/>
<dbReference type="CTD" id="3290"/>
<dbReference type="VEuPathDB" id="HostDB:ENSBTAG00000015086"/>
<dbReference type="eggNOG" id="KOG1205">
    <property type="taxonomic scope" value="Eukaryota"/>
</dbReference>
<dbReference type="HOGENOM" id="CLU_010194_2_1_1"/>
<dbReference type="InParanoid" id="Q8HZJ8"/>
<dbReference type="OrthoDB" id="1933717at2759"/>
<dbReference type="TreeFam" id="TF329114"/>
<dbReference type="Proteomes" id="UP000009136">
    <property type="component" value="Chromosome 16"/>
</dbReference>
<dbReference type="Bgee" id="ENSBTAG00000015086">
    <property type="expression patterns" value="Expressed in liver and 89 other cell types or tissues"/>
</dbReference>
<dbReference type="GO" id="GO:0005789">
    <property type="term" value="C:endoplasmic reticulum membrane"/>
    <property type="evidence" value="ECO:0000318"/>
    <property type="project" value="GO_Central"/>
</dbReference>
<dbReference type="GO" id="GO:0043231">
    <property type="term" value="C:intracellular membrane-bounded organelle"/>
    <property type="evidence" value="ECO:0000318"/>
    <property type="project" value="GO_Central"/>
</dbReference>
<dbReference type="GO" id="GO:0070524">
    <property type="term" value="F:11-beta-hydroxysteroid dehydrogenase (NADP+) activity"/>
    <property type="evidence" value="ECO:0000318"/>
    <property type="project" value="GO_Central"/>
</dbReference>
<dbReference type="GO" id="GO:0005496">
    <property type="term" value="F:steroid binding"/>
    <property type="evidence" value="ECO:0000318"/>
    <property type="project" value="GO_Central"/>
</dbReference>
<dbReference type="GO" id="GO:0006706">
    <property type="term" value="P:steroid catabolic process"/>
    <property type="evidence" value="ECO:0000318"/>
    <property type="project" value="GO_Central"/>
</dbReference>
<dbReference type="CDD" id="cd05332">
    <property type="entry name" value="11beta-HSD1_like_SDR_c"/>
    <property type="match status" value="1"/>
</dbReference>
<dbReference type="FunFam" id="3.40.50.720:FF:000329">
    <property type="entry name" value="Corticosteroid 11-beta-dehydrogenase isozyme 1"/>
    <property type="match status" value="1"/>
</dbReference>
<dbReference type="Gene3D" id="3.40.50.720">
    <property type="entry name" value="NAD(P)-binding Rossmann-like Domain"/>
    <property type="match status" value="1"/>
</dbReference>
<dbReference type="InterPro" id="IPR051253">
    <property type="entry name" value="11-beta-HSD"/>
</dbReference>
<dbReference type="InterPro" id="IPR036291">
    <property type="entry name" value="NAD(P)-bd_dom_sf"/>
</dbReference>
<dbReference type="InterPro" id="IPR020904">
    <property type="entry name" value="Sc_DH/Rdtase_CS"/>
</dbReference>
<dbReference type="InterPro" id="IPR002347">
    <property type="entry name" value="SDR_fam"/>
</dbReference>
<dbReference type="PANTHER" id="PTHR44279:SF1">
    <property type="entry name" value="11-BETA-HYDROXYSTEROID DEHYDROGENASE 1"/>
    <property type="match status" value="1"/>
</dbReference>
<dbReference type="PANTHER" id="PTHR44279">
    <property type="entry name" value="HYDROXYSTEROID (11-BETA) DEHYDROGENASE 1-LIKE B-RELATED"/>
    <property type="match status" value="1"/>
</dbReference>
<dbReference type="Pfam" id="PF00106">
    <property type="entry name" value="adh_short"/>
    <property type="match status" value="1"/>
</dbReference>
<dbReference type="PRINTS" id="PR00081">
    <property type="entry name" value="GDHRDH"/>
</dbReference>
<dbReference type="SUPFAM" id="SSF51735">
    <property type="entry name" value="NAD(P)-binding Rossmann-fold domains"/>
    <property type="match status" value="1"/>
</dbReference>
<dbReference type="PROSITE" id="PS00061">
    <property type="entry name" value="ADH_SHORT"/>
    <property type="match status" value="1"/>
</dbReference>
<accession>Q8HZJ8</accession>
<accession>F6PTG3</accession>
<name>DHI1_BOVIN</name>
<comment type="function">
    <text evidence="1 2 3 6">Controls the reversible conversion of biologically active glucocorticoids such as cortisone to cortisol, and 11-dehydrocorticosterone to corticosterone in the presence of NADP(H) (PubMed:17470521). Participates in the corticosteroid receptor-mediated anti-inflammatory response, as well as metabolic and homeostatic processes (By similarity). Plays a role in the secretion of aqueous humor in the eye, maintaining a normotensive, intraocular environment (By similarity). Bidirectional in vitro, predominantly functions as a reductase in vivo, thereby increasing the concentration of active glucocorticoids (By similarity). It has broad substrate specificity, besides glucocorticoids, it accepts other steroid and sterol substrates. Interconverts 7-oxo- and 7-hydroxy-neurosteroids such as 7-oxopregnenolone and 7beta-hydroxypregnenolone, 7-oxodehydroepiandrosterone (3beta-hydroxy-5-androstene-7,17-dione) and 7beta-hydroxydehydroepiandrosterone (3beta,7beta-dihydroxyandrost-5-en-17-one), among others (By similarity). Catalyzes the stereo-specific conversion of the major dietary oxysterol, 7-ketocholesterol (7-oxocholesterol), into the more polar 7-beta-hydroxycholesterol metabolite (By similarity). 7-oxocholesterol is one of the most important oxysterols, it participates in several events such as induction of apoptosis, accumulation in atherosclerotic lesions, lipid peroxidation, and induction of foam cell formation (By similarity). Mediates the 7-oxo reduction of 7-oxolithocholate mainly to chenodeoxycholate, and to a lesser extent to ursodeoxycholate, both in its free form and when conjugated to glycine or taurine, providing a link between glucocorticoid activation and bile acid metabolism (By similarity). Catalyzes the synthesis of 7-beta-25-dihydroxycholesterol from 7-oxo-25-hydroxycholesterol in vitro, which acts as a ligand for the G-protein-coupled receptor (GPCR) Epstein-Barr virus-induced gene 2 (EBI2) and may thereby regulate immune cell migration (By similarity).</text>
</comment>
<comment type="catalytic activity">
    <reaction evidence="6">
        <text>an 11beta-hydroxysteroid + NADP(+) = an 11-oxosteroid + NADPH + H(+)</text>
        <dbReference type="Rhea" id="RHEA:11388"/>
        <dbReference type="ChEBI" id="CHEBI:15378"/>
        <dbReference type="ChEBI" id="CHEBI:35346"/>
        <dbReference type="ChEBI" id="CHEBI:47787"/>
        <dbReference type="ChEBI" id="CHEBI:57783"/>
        <dbReference type="ChEBI" id="CHEBI:58349"/>
        <dbReference type="EC" id="1.1.1.146"/>
    </reaction>
    <physiologicalReaction direction="left-to-right" evidence="9">
        <dbReference type="Rhea" id="RHEA:11389"/>
    </physiologicalReaction>
    <physiologicalReaction direction="right-to-left" evidence="9">
        <dbReference type="Rhea" id="RHEA:11390"/>
    </physiologicalReaction>
</comment>
<comment type="catalytic activity">
    <reaction evidence="1">
        <text>corticosterone + NADP(+) = 11-dehydrocorticosterone + NADPH + H(+)</text>
        <dbReference type="Rhea" id="RHEA:42200"/>
        <dbReference type="ChEBI" id="CHEBI:15378"/>
        <dbReference type="ChEBI" id="CHEBI:16827"/>
        <dbReference type="ChEBI" id="CHEBI:57783"/>
        <dbReference type="ChEBI" id="CHEBI:58349"/>
        <dbReference type="ChEBI" id="CHEBI:78600"/>
    </reaction>
    <physiologicalReaction direction="left-to-right" evidence="1">
        <dbReference type="Rhea" id="RHEA:42201"/>
    </physiologicalReaction>
    <physiologicalReaction direction="right-to-left" evidence="1">
        <dbReference type="Rhea" id="RHEA:42202"/>
    </physiologicalReaction>
</comment>
<comment type="catalytic activity">
    <reaction evidence="6">
        <text>cortisone + NADPH + H(+) = cortisol + NADP(+)</text>
        <dbReference type="Rhea" id="RHEA:68616"/>
        <dbReference type="ChEBI" id="CHEBI:15378"/>
        <dbReference type="ChEBI" id="CHEBI:16962"/>
        <dbReference type="ChEBI" id="CHEBI:17650"/>
        <dbReference type="ChEBI" id="CHEBI:57783"/>
        <dbReference type="ChEBI" id="CHEBI:58349"/>
    </reaction>
    <physiologicalReaction direction="left-to-right" evidence="9">
        <dbReference type="Rhea" id="RHEA:68617"/>
    </physiologicalReaction>
    <physiologicalReaction direction="right-to-left" evidence="9">
        <dbReference type="Rhea" id="RHEA:68618"/>
    </physiologicalReaction>
</comment>
<comment type="catalytic activity">
    <reaction evidence="1">
        <text>a 7beta-hydroxysteroid + NADP(+) = a 7-oxosteroid + NADPH + H(+)</text>
        <dbReference type="Rhea" id="RHEA:20233"/>
        <dbReference type="ChEBI" id="CHEBI:15378"/>
        <dbReference type="ChEBI" id="CHEBI:35349"/>
        <dbReference type="ChEBI" id="CHEBI:47789"/>
        <dbReference type="ChEBI" id="CHEBI:57783"/>
        <dbReference type="ChEBI" id="CHEBI:58349"/>
        <dbReference type="EC" id="1.1.1.201"/>
    </reaction>
    <physiologicalReaction direction="right-to-left" evidence="1">
        <dbReference type="Rhea" id="RHEA:20235"/>
    </physiologicalReaction>
</comment>
<comment type="catalytic activity">
    <reaction evidence="1">
        <text>7-oxocholesterol + NADPH + H(+) = 7beta-hydroxycholesterol + NADP(+)</text>
        <dbReference type="Rhea" id="RHEA:68656"/>
        <dbReference type="ChEBI" id="CHEBI:15378"/>
        <dbReference type="ChEBI" id="CHEBI:42989"/>
        <dbReference type="ChEBI" id="CHEBI:57783"/>
        <dbReference type="ChEBI" id="CHEBI:58349"/>
        <dbReference type="ChEBI" id="CHEBI:64294"/>
    </reaction>
    <physiologicalReaction direction="left-to-right" evidence="1">
        <dbReference type="Rhea" id="RHEA:68657"/>
    </physiologicalReaction>
</comment>
<comment type="catalytic activity">
    <reaction evidence="1">
        <text>chenodeoxycholate + NADP(+) = 7-oxolithocholate + NADPH + H(+)</text>
        <dbReference type="Rhea" id="RHEA:53820"/>
        <dbReference type="ChEBI" id="CHEBI:15378"/>
        <dbReference type="ChEBI" id="CHEBI:36234"/>
        <dbReference type="ChEBI" id="CHEBI:57783"/>
        <dbReference type="ChEBI" id="CHEBI:58349"/>
        <dbReference type="ChEBI" id="CHEBI:78605"/>
    </reaction>
    <physiologicalReaction direction="right-to-left" evidence="1">
        <dbReference type="Rhea" id="RHEA:53822"/>
    </physiologicalReaction>
</comment>
<comment type="catalytic activity">
    <reaction evidence="1">
        <text>7-oxolithocholate + NADPH + H(+) = ursodeoxycholate + NADP(+)</text>
        <dbReference type="Rhea" id="RHEA:47540"/>
        <dbReference type="ChEBI" id="CHEBI:15378"/>
        <dbReference type="ChEBI" id="CHEBI:57783"/>
        <dbReference type="ChEBI" id="CHEBI:58349"/>
        <dbReference type="ChEBI" id="CHEBI:78604"/>
        <dbReference type="ChEBI" id="CHEBI:78605"/>
    </reaction>
    <physiologicalReaction direction="left-to-right" evidence="1">
        <dbReference type="Rhea" id="RHEA:47541"/>
    </physiologicalReaction>
</comment>
<comment type="catalytic activity">
    <reaction evidence="1">
        <text>glycochenodeoxycholate + NADP(+) = 7-oxoglycolithocholate + NADPH + H(+)</text>
        <dbReference type="Rhea" id="RHEA:65056"/>
        <dbReference type="ChEBI" id="CHEBI:15378"/>
        <dbReference type="ChEBI" id="CHEBI:36252"/>
        <dbReference type="ChEBI" id="CHEBI:57783"/>
        <dbReference type="ChEBI" id="CHEBI:58349"/>
        <dbReference type="ChEBI" id="CHEBI:137818"/>
    </reaction>
    <physiologicalReaction direction="right-to-left" evidence="1">
        <dbReference type="Rhea" id="RHEA:65058"/>
    </physiologicalReaction>
</comment>
<comment type="catalytic activity">
    <reaction evidence="1">
        <text>taurochenodeoxycholate + NADP(+) = 7-oxotaurolithocholate + NADPH + H(+)</text>
        <dbReference type="Rhea" id="RHEA:65060"/>
        <dbReference type="ChEBI" id="CHEBI:9407"/>
        <dbReference type="ChEBI" id="CHEBI:15378"/>
        <dbReference type="ChEBI" id="CHEBI:57783"/>
        <dbReference type="ChEBI" id="CHEBI:58349"/>
        <dbReference type="ChEBI" id="CHEBI:137724"/>
    </reaction>
    <physiologicalReaction direction="right-to-left" evidence="1">
        <dbReference type="Rhea" id="RHEA:65062"/>
    </physiologicalReaction>
</comment>
<comment type="catalytic activity">
    <reaction evidence="1">
        <text>tauroursodeoxycholate + NADP(+) = 7-oxotaurolithocholate + NADPH + H(+)</text>
        <dbReference type="Rhea" id="RHEA:68980"/>
        <dbReference type="ChEBI" id="CHEBI:15378"/>
        <dbReference type="ChEBI" id="CHEBI:57783"/>
        <dbReference type="ChEBI" id="CHEBI:58349"/>
        <dbReference type="ChEBI" id="CHEBI:132028"/>
        <dbReference type="ChEBI" id="CHEBI:137724"/>
    </reaction>
    <physiologicalReaction direction="right-to-left" evidence="1">
        <dbReference type="Rhea" id="RHEA:68982"/>
    </physiologicalReaction>
</comment>
<comment type="catalytic activity">
    <reaction evidence="1">
        <text>glycoursodeoxycholate + NADP(+) = 7-oxoglycolithocholate + NADPH + H(+)</text>
        <dbReference type="Rhea" id="RHEA:68976"/>
        <dbReference type="ChEBI" id="CHEBI:15378"/>
        <dbReference type="ChEBI" id="CHEBI:57783"/>
        <dbReference type="ChEBI" id="CHEBI:58349"/>
        <dbReference type="ChEBI" id="CHEBI:132030"/>
        <dbReference type="ChEBI" id="CHEBI:137818"/>
    </reaction>
    <physiologicalReaction direction="right-to-left" evidence="1">
        <dbReference type="Rhea" id="RHEA:68978"/>
    </physiologicalReaction>
</comment>
<comment type="catalytic activity">
    <reaction evidence="1">
        <text>7-oxopregnenolone + NADPH + H(+) = 7beta-hydroxypregnenolone + NADP(+)</text>
        <dbReference type="Rhea" id="RHEA:69436"/>
        <dbReference type="ChEBI" id="CHEBI:15378"/>
        <dbReference type="ChEBI" id="CHEBI:57783"/>
        <dbReference type="ChEBI" id="CHEBI:58349"/>
        <dbReference type="ChEBI" id="CHEBI:183806"/>
        <dbReference type="ChEBI" id="CHEBI:183807"/>
    </reaction>
    <physiologicalReaction direction="left-to-right" evidence="1">
        <dbReference type="Rhea" id="RHEA:69437"/>
    </physiologicalReaction>
</comment>
<comment type="catalytic activity">
    <reaction evidence="1">
        <text>3beta,7alpha-dihydroxyandrost-5-en-17-one + NADP(+) = 3beta-hydroxy-5-androstene-7,17-dione + NADPH + H(+)</text>
        <dbReference type="Rhea" id="RHEA:69440"/>
        <dbReference type="ChEBI" id="CHEBI:15378"/>
        <dbReference type="ChEBI" id="CHEBI:57783"/>
        <dbReference type="ChEBI" id="CHEBI:58349"/>
        <dbReference type="ChEBI" id="CHEBI:81471"/>
        <dbReference type="ChEBI" id="CHEBI:183808"/>
    </reaction>
    <physiologicalReaction direction="left-to-right" evidence="1">
        <dbReference type="Rhea" id="RHEA:69441"/>
    </physiologicalReaction>
</comment>
<comment type="catalytic activity">
    <reaction evidence="1">
        <text>3beta-hydroxy-5-androstene-7,17-dione + NADPH + H(+) = 3beta,7beta-dihydroxyandrost-5-en-17-one + NADP(+)</text>
        <dbReference type="Rhea" id="RHEA:69452"/>
        <dbReference type="ChEBI" id="CHEBI:15378"/>
        <dbReference type="ChEBI" id="CHEBI:57783"/>
        <dbReference type="ChEBI" id="CHEBI:58349"/>
        <dbReference type="ChEBI" id="CHEBI:183368"/>
        <dbReference type="ChEBI" id="CHEBI:183808"/>
    </reaction>
    <physiologicalReaction direction="left-to-right" evidence="1">
        <dbReference type="Rhea" id="RHEA:69453"/>
    </physiologicalReaction>
</comment>
<comment type="catalytic activity">
    <reaction evidence="1">
        <text>3beta-hydroxy-5alpha-androstane-7,17-dione + NADPH + H(+) = 3beta,7beta-dihydroxy-5alpha-androstan-17-one + NADP(+)</text>
        <dbReference type="Rhea" id="RHEA:69456"/>
        <dbReference type="ChEBI" id="CHEBI:15378"/>
        <dbReference type="ChEBI" id="CHEBI:57783"/>
        <dbReference type="ChEBI" id="CHEBI:58349"/>
        <dbReference type="ChEBI" id="CHEBI:79834"/>
        <dbReference type="ChEBI" id="CHEBI:183809"/>
    </reaction>
    <physiologicalReaction direction="left-to-right" evidence="1">
        <dbReference type="Rhea" id="RHEA:69457"/>
    </physiologicalReaction>
</comment>
<comment type="subunit">
    <text evidence="1">Homodimer.</text>
</comment>
<comment type="subcellular location">
    <subcellularLocation>
        <location evidence="3">Endoplasmic reticulum membrane</location>
        <topology evidence="3">Single-pass type II membrane protein</topology>
    </subcellularLocation>
</comment>
<comment type="tissue specificity">
    <text evidence="5">Expressed highest in liver and ovaries (corpora lutea, granulosa cells, thecal, uterine caruncle and intercarunculer tissues), lower expression in kidney and spleen, and lowest in the adrenal.</text>
</comment>
<comment type="similarity">
    <text evidence="8">Belongs to the short-chain dehydrogenases/reductases (SDR) family.</text>
</comment>
<sequence>MAFMKKYLLPILGIFLAYYYYSANEEFRPEMLRGKRVIVTGASKGIGREMAYHLARMGAHVVVTARSEESLKKVVSRCLELGAASAHYVAGTMENMTFAEQFVAKAGELVGGLDMLILNHIHYTPLGVFSNDIHLLRRTLEVNLLSYVVLSTAALPMLKQTNGSIVVVSSIAGKIACPLVAAYSASKFALDGFFSSLRMEYEATKVNVSITLCILGLIDTDTAMKAVAGIFNAKASPKEECALEIIKGGTLRQDEVYYDSSILTPLLLRNPGRKIMEFFFLKKYNMERFINN</sequence>
<keyword id="KW-0256">Endoplasmic reticulum</keyword>
<keyword id="KW-0472">Membrane</keyword>
<keyword id="KW-0560">Oxidoreductase</keyword>
<keyword id="KW-1185">Reference proteome</keyword>
<keyword id="KW-0812">Transmembrane</keyword>
<keyword id="KW-1133">Transmembrane helix</keyword>